<geneLocation type="mitochondrion"/>
<gene>
    <name type="primary">mt-cyb</name>
    <name type="synonym">cob</name>
    <name type="synonym">cytb</name>
    <name type="synonym">mtcyb</name>
</gene>
<evidence type="ECO:0000250" key="1"/>
<evidence type="ECO:0000250" key="2">
    <source>
        <dbReference type="UniProtKB" id="P00157"/>
    </source>
</evidence>
<evidence type="ECO:0000255" key="3">
    <source>
        <dbReference type="PROSITE-ProRule" id="PRU00967"/>
    </source>
</evidence>
<evidence type="ECO:0000255" key="4">
    <source>
        <dbReference type="PROSITE-ProRule" id="PRU00968"/>
    </source>
</evidence>
<sequence>MALNIRKTHPLLKIVNQTLIDLPAPSNISIWWNFGSLLGLCLIIQIVTGLFLAMHYTADISLAFSSVIHICRDVNYGWLIRNIHANGASLFFVCVYIHIARGLYYGSYLYKETWNIGVILLFLLMATAFVGYVLPWGQMSFWGATVITNLLSAFPYIGDTLVQWIWGGFSVDNATLTRFFAFHFLLPFLITALMVIHVLFLHETGSNNPMGLNSDMDKISFHPYFSYKDALGFLTLLILLGALALFLPNLLGDAENFIPANPLVTPPHIKPEWYFLFAYAILRSIPNKLGGVLALLFSILILLLVPLLHTSKQRSSTFRPLTQVFFWILVTNMLVLTWIGGQPVEQPFILIGQIASITYFSLFLIAMPLAGWWENKILSLN</sequence>
<comment type="function">
    <text evidence="2">Component of the ubiquinol-cytochrome c reductase complex (complex III or cytochrome b-c1 complex) that is part of the mitochondrial respiratory chain. The b-c1 complex mediates electron transfer from ubiquinol to cytochrome c. Contributes to the generation of a proton gradient across the mitochondrial membrane that is then used for ATP synthesis.</text>
</comment>
<comment type="cofactor">
    <cofactor evidence="2">
        <name>heme b</name>
        <dbReference type="ChEBI" id="CHEBI:60344"/>
    </cofactor>
    <text evidence="2">Binds 2 heme b groups non-covalently.</text>
</comment>
<comment type="subunit">
    <text evidence="2">The cytochrome bc1 complex contains 3 respiratory subunits (MT-CYB, CYC1 and UQCRFS1), 2 core proteins (UQCRC1 and UQCRC2) and probably 6 low-molecular weight proteins.</text>
</comment>
<comment type="subcellular location">
    <subcellularLocation>
        <location evidence="2">Mitochondrion inner membrane</location>
        <topology evidence="2">Multi-pass membrane protein</topology>
    </subcellularLocation>
</comment>
<comment type="miscellaneous">
    <text evidence="1">Heme 1 (or BL or b562) is low-potential and absorbs at about 562 nm, and heme 2 (or BH or b566) is high-potential and absorbs at about 566 nm.</text>
</comment>
<comment type="similarity">
    <text evidence="3 4">Belongs to the cytochrome b family.</text>
</comment>
<comment type="caution">
    <text evidence="2">The full-length protein contains only eight transmembrane helices, not nine as predicted by bioinformatics tools.</text>
</comment>
<reference key="1">
    <citation type="journal article" date="1992" name="Nature">
        <title>Rates of mitochondrial DNA evolution in sharks are slow compared with mammals.</title>
        <authorList>
            <person name="Martin A.P."/>
            <person name="Naylor G.J.P."/>
            <person name="Palumbi S.R."/>
        </authorList>
    </citation>
    <scope>NUCLEOTIDE SEQUENCE [GENOMIC DNA]</scope>
</reference>
<keyword id="KW-0249">Electron transport</keyword>
<keyword id="KW-0349">Heme</keyword>
<keyword id="KW-0408">Iron</keyword>
<keyword id="KW-0472">Membrane</keyword>
<keyword id="KW-0479">Metal-binding</keyword>
<keyword id="KW-0496">Mitochondrion</keyword>
<keyword id="KW-0999">Mitochondrion inner membrane</keyword>
<keyword id="KW-0679">Respiratory chain</keyword>
<keyword id="KW-0812">Transmembrane</keyword>
<keyword id="KW-1133">Transmembrane helix</keyword>
<keyword id="KW-0813">Transport</keyword>
<keyword id="KW-0830">Ubiquinone</keyword>
<proteinExistence type="inferred from homology"/>
<feature type="chain" id="PRO_0000061068" description="Cytochrome b">
    <location>
        <begin position="1"/>
        <end position="381"/>
    </location>
</feature>
<feature type="transmembrane region" description="Helical" evidence="2">
    <location>
        <begin position="34"/>
        <end position="54"/>
    </location>
</feature>
<feature type="transmembrane region" description="Helical" evidence="2">
    <location>
        <begin position="78"/>
        <end position="99"/>
    </location>
</feature>
<feature type="transmembrane region" description="Helical" evidence="2">
    <location>
        <begin position="114"/>
        <end position="134"/>
    </location>
</feature>
<feature type="transmembrane region" description="Helical" evidence="2">
    <location>
        <begin position="179"/>
        <end position="199"/>
    </location>
</feature>
<feature type="transmembrane region" description="Helical" evidence="2">
    <location>
        <begin position="227"/>
        <end position="247"/>
    </location>
</feature>
<feature type="transmembrane region" description="Helical" evidence="2">
    <location>
        <begin position="289"/>
        <end position="309"/>
    </location>
</feature>
<feature type="transmembrane region" description="Helical" evidence="2">
    <location>
        <begin position="321"/>
        <end position="341"/>
    </location>
</feature>
<feature type="transmembrane region" description="Helical" evidence="2">
    <location>
        <begin position="348"/>
        <end position="368"/>
    </location>
</feature>
<feature type="binding site" description="axial binding residue" evidence="2">
    <location>
        <position position="84"/>
    </location>
    <ligand>
        <name>heme b</name>
        <dbReference type="ChEBI" id="CHEBI:60344"/>
        <label>b562</label>
    </ligand>
    <ligandPart>
        <name>Fe</name>
        <dbReference type="ChEBI" id="CHEBI:18248"/>
    </ligandPart>
</feature>
<feature type="binding site" description="axial binding residue" evidence="2">
    <location>
        <position position="98"/>
    </location>
    <ligand>
        <name>heme b</name>
        <dbReference type="ChEBI" id="CHEBI:60344"/>
        <label>b566</label>
    </ligand>
    <ligandPart>
        <name>Fe</name>
        <dbReference type="ChEBI" id="CHEBI:18248"/>
    </ligandPart>
</feature>
<feature type="binding site" description="axial binding residue" evidence="2">
    <location>
        <position position="183"/>
    </location>
    <ligand>
        <name>heme b</name>
        <dbReference type="ChEBI" id="CHEBI:60344"/>
        <label>b562</label>
    </ligand>
    <ligandPart>
        <name>Fe</name>
        <dbReference type="ChEBI" id="CHEBI:18248"/>
    </ligandPart>
</feature>
<feature type="binding site" description="axial binding residue" evidence="2">
    <location>
        <position position="197"/>
    </location>
    <ligand>
        <name>heme b</name>
        <dbReference type="ChEBI" id="CHEBI:60344"/>
        <label>b566</label>
    </ligand>
    <ligandPart>
        <name>Fe</name>
        <dbReference type="ChEBI" id="CHEBI:18248"/>
    </ligandPart>
</feature>
<feature type="binding site" evidence="2">
    <location>
        <position position="202"/>
    </location>
    <ligand>
        <name>a ubiquinone</name>
        <dbReference type="ChEBI" id="CHEBI:16389"/>
    </ligand>
</feature>
<accession>P34871</accession>
<dbReference type="EMBL" id="L08037">
    <property type="protein sequence ID" value="AAA31866.1"/>
    <property type="molecule type" value="Genomic_DNA"/>
</dbReference>
<dbReference type="SMR" id="P34871"/>
<dbReference type="GO" id="GO:0005743">
    <property type="term" value="C:mitochondrial inner membrane"/>
    <property type="evidence" value="ECO:0007669"/>
    <property type="project" value="UniProtKB-SubCell"/>
</dbReference>
<dbReference type="GO" id="GO:0045275">
    <property type="term" value="C:respiratory chain complex III"/>
    <property type="evidence" value="ECO:0007669"/>
    <property type="project" value="InterPro"/>
</dbReference>
<dbReference type="GO" id="GO:0046872">
    <property type="term" value="F:metal ion binding"/>
    <property type="evidence" value="ECO:0007669"/>
    <property type="project" value="UniProtKB-KW"/>
</dbReference>
<dbReference type="GO" id="GO:0008121">
    <property type="term" value="F:ubiquinol-cytochrome-c reductase activity"/>
    <property type="evidence" value="ECO:0007669"/>
    <property type="project" value="InterPro"/>
</dbReference>
<dbReference type="GO" id="GO:0006122">
    <property type="term" value="P:mitochondrial electron transport, ubiquinol to cytochrome c"/>
    <property type="evidence" value="ECO:0007669"/>
    <property type="project" value="TreeGrafter"/>
</dbReference>
<dbReference type="CDD" id="cd00290">
    <property type="entry name" value="cytochrome_b_C"/>
    <property type="match status" value="1"/>
</dbReference>
<dbReference type="CDD" id="cd00284">
    <property type="entry name" value="Cytochrome_b_N"/>
    <property type="match status" value="1"/>
</dbReference>
<dbReference type="FunFam" id="1.20.810.10:FF:000002">
    <property type="entry name" value="Cytochrome b"/>
    <property type="match status" value="1"/>
</dbReference>
<dbReference type="Gene3D" id="1.20.810.10">
    <property type="entry name" value="Cytochrome Bc1 Complex, Chain C"/>
    <property type="match status" value="1"/>
</dbReference>
<dbReference type="InterPro" id="IPR005798">
    <property type="entry name" value="Cyt_b/b6_C"/>
</dbReference>
<dbReference type="InterPro" id="IPR036150">
    <property type="entry name" value="Cyt_b/b6_C_sf"/>
</dbReference>
<dbReference type="InterPro" id="IPR005797">
    <property type="entry name" value="Cyt_b/b6_N"/>
</dbReference>
<dbReference type="InterPro" id="IPR027387">
    <property type="entry name" value="Cytb/b6-like_sf"/>
</dbReference>
<dbReference type="InterPro" id="IPR030689">
    <property type="entry name" value="Cytochrome_b"/>
</dbReference>
<dbReference type="InterPro" id="IPR048260">
    <property type="entry name" value="Cytochrome_b_C_euk/bac"/>
</dbReference>
<dbReference type="InterPro" id="IPR048259">
    <property type="entry name" value="Cytochrome_b_N_euk/bac"/>
</dbReference>
<dbReference type="InterPro" id="IPR016174">
    <property type="entry name" value="Di-haem_cyt_TM"/>
</dbReference>
<dbReference type="PANTHER" id="PTHR19271">
    <property type="entry name" value="CYTOCHROME B"/>
    <property type="match status" value="1"/>
</dbReference>
<dbReference type="PANTHER" id="PTHR19271:SF16">
    <property type="entry name" value="CYTOCHROME B"/>
    <property type="match status" value="1"/>
</dbReference>
<dbReference type="Pfam" id="PF00032">
    <property type="entry name" value="Cytochrom_B_C"/>
    <property type="match status" value="1"/>
</dbReference>
<dbReference type="Pfam" id="PF00033">
    <property type="entry name" value="Cytochrome_B"/>
    <property type="match status" value="1"/>
</dbReference>
<dbReference type="PIRSF" id="PIRSF038885">
    <property type="entry name" value="COB"/>
    <property type="match status" value="1"/>
</dbReference>
<dbReference type="SUPFAM" id="SSF81648">
    <property type="entry name" value="a domain/subunit of cytochrome bc1 complex (Ubiquinol-cytochrome c reductase)"/>
    <property type="match status" value="1"/>
</dbReference>
<dbReference type="SUPFAM" id="SSF81342">
    <property type="entry name" value="Transmembrane di-heme cytochromes"/>
    <property type="match status" value="1"/>
</dbReference>
<dbReference type="PROSITE" id="PS51003">
    <property type="entry name" value="CYTB_CTER"/>
    <property type="match status" value="1"/>
</dbReference>
<dbReference type="PROSITE" id="PS51002">
    <property type="entry name" value="CYTB_NTER"/>
    <property type="match status" value="1"/>
</dbReference>
<name>CYB_ISUPA</name>
<protein>
    <recommendedName>
        <fullName>Cytochrome b</fullName>
    </recommendedName>
    <alternativeName>
        <fullName>Complex III subunit 3</fullName>
    </alternativeName>
    <alternativeName>
        <fullName>Complex III subunit III</fullName>
    </alternativeName>
    <alternativeName>
        <fullName>Cytochrome b-c1 complex subunit 3</fullName>
    </alternativeName>
    <alternativeName>
        <fullName>Ubiquinol-cytochrome-c reductase complex cytochrome b subunit</fullName>
    </alternativeName>
</protein>
<organism>
    <name type="scientific">Isurus paucus</name>
    <name type="common">Longfin mako shark</name>
    <dbReference type="NCBI Taxonomy" id="7847"/>
    <lineage>
        <taxon>Eukaryota</taxon>
        <taxon>Metazoa</taxon>
        <taxon>Chordata</taxon>
        <taxon>Craniata</taxon>
        <taxon>Vertebrata</taxon>
        <taxon>Chondrichthyes</taxon>
        <taxon>Elasmobranchii</taxon>
        <taxon>Galeomorphii</taxon>
        <taxon>Galeoidea</taxon>
        <taxon>Lamniformes</taxon>
        <taxon>Alopiidae</taxon>
        <taxon>Isurus</taxon>
    </lineage>
</organism>